<protein>
    <recommendedName>
        <fullName>Formamidopyrimidine-DNA glycosylase</fullName>
        <shortName>Fapy-DNA glycosylase</shortName>
        <ecNumber>3.2.2.23</ecNumber>
    </recommendedName>
    <alternativeName>
        <fullName>DNA-(apurinic or apyrimidinic site) lyase MutM</fullName>
        <shortName>AP lyase MutM</shortName>
        <ecNumber>4.2.99.18</ecNumber>
    </alternativeName>
</protein>
<gene>
    <name type="primary">mutM</name>
    <name type="synonym">fpg</name>
    <name type="ordered locus">MYPU_3100</name>
</gene>
<name>FPG_MYCPU</name>
<feature type="initiator methionine" description="Removed" evidence="1">
    <location>
        <position position="1"/>
    </location>
</feature>
<feature type="chain" id="PRO_0000170838" description="Formamidopyrimidine-DNA glycosylase">
    <location>
        <begin position="2"/>
        <end position="278"/>
    </location>
</feature>
<feature type="zinc finger region" description="FPG-type">
    <location>
        <begin position="239"/>
        <end position="273"/>
    </location>
</feature>
<feature type="active site" description="Schiff-base intermediate with DNA" evidence="1">
    <location>
        <position position="2"/>
    </location>
</feature>
<feature type="active site" description="Proton donor" evidence="1">
    <location>
        <position position="3"/>
    </location>
</feature>
<feature type="active site" description="Proton donor; for beta-elimination activity" evidence="1">
    <location>
        <position position="59"/>
    </location>
</feature>
<feature type="active site" description="Proton donor; for delta-elimination activity" evidence="1">
    <location>
        <position position="263"/>
    </location>
</feature>
<feature type="binding site" evidence="1">
    <location>
        <position position="94"/>
    </location>
    <ligand>
        <name>DNA</name>
        <dbReference type="ChEBI" id="CHEBI:16991"/>
    </ligand>
</feature>
<feature type="binding site" evidence="1">
    <location>
        <position position="113"/>
    </location>
    <ligand>
        <name>DNA</name>
        <dbReference type="ChEBI" id="CHEBI:16991"/>
    </ligand>
</feature>
<feature type="binding site" evidence="1">
    <location>
        <position position="154"/>
    </location>
    <ligand>
        <name>DNA</name>
        <dbReference type="ChEBI" id="CHEBI:16991"/>
    </ligand>
</feature>
<dbReference type="EC" id="3.2.2.23"/>
<dbReference type="EC" id="4.2.99.18"/>
<dbReference type="EMBL" id="AL445564">
    <property type="protein sequence ID" value="CAC13483.1"/>
    <property type="molecule type" value="Genomic_DNA"/>
</dbReference>
<dbReference type="PIR" id="F90550">
    <property type="entry name" value="F90550"/>
</dbReference>
<dbReference type="RefSeq" id="WP_010925114.1">
    <property type="nucleotide sequence ID" value="NC_002771.1"/>
</dbReference>
<dbReference type="SMR" id="Q98QQ1"/>
<dbReference type="STRING" id="272635.gene:17576901"/>
<dbReference type="KEGG" id="mpu:MYPU_3100"/>
<dbReference type="eggNOG" id="COG0266">
    <property type="taxonomic scope" value="Bacteria"/>
</dbReference>
<dbReference type="HOGENOM" id="CLU_038423_1_3_14"/>
<dbReference type="BioCyc" id="MPUL272635:G1GT6-311-MONOMER"/>
<dbReference type="Proteomes" id="UP000000528">
    <property type="component" value="Chromosome"/>
</dbReference>
<dbReference type="GO" id="GO:0034039">
    <property type="term" value="F:8-oxo-7,8-dihydroguanine DNA N-glycosylase activity"/>
    <property type="evidence" value="ECO:0007669"/>
    <property type="project" value="TreeGrafter"/>
</dbReference>
<dbReference type="GO" id="GO:0140078">
    <property type="term" value="F:class I DNA-(apurinic or apyrimidinic site) endonuclease activity"/>
    <property type="evidence" value="ECO:0007669"/>
    <property type="project" value="UniProtKB-EC"/>
</dbReference>
<dbReference type="GO" id="GO:0003684">
    <property type="term" value="F:damaged DNA binding"/>
    <property type="evidence" value="ECO:0007669"/>
    <property type="project" value="InterPro"/>
</dbReference>
<dbReference type="GO" id="GO:0008270">
    <property type="term" value="F:zinc ion binding"/>
    <property type="evidence" value="ECO:0007669"/>
    <property type="project" value="UniProtKB-UniRule"/>
</dbReference>
<dbReference type="GO" id="GO:0006284">
    <property type="term" value="P:base-excision repair"/>
    <property type="evidence" value="ECO:0007669"/>
    <property type="project" value="InterPro"/>
</dbReference>
<dbReference type="CDD" id="cd08966">
    <property type="entry name" value="EcFpg-like_N"/>
    <property type="match status" value="1"/>
</dbReference>
<dbReference type="FunFam" id="1.10.8.50:FF:000003">
    <property type="entry name" value="Formamidopyrimidine-DNA glycosylase"/>
    <property type="match status" value="1"/>
</dbReference>
<dbReference type="Gene3D" id="1.10.8.50">
    <property type="match status" value="1"/>
</dbReference>
<dbReference type="Gene3D" id="3.20.190.10">
    <property type="entry name" value="MutM-like, N-terminal"/>
    <property type="match status" value="1"/>
</dbReference>
<dbReference type="HAMAP" id="MF_00103">
    <property type="entry name" value="Fapy_DNA_glycosyl"/>
    <property type="match status" value="1"/>
</dbReference>
<dbReference type="InterPro" id="IPR015886">
    <property type="entry name" value="DNA_glyclase/AP_lyase_DNA-bd"/>
</dbReference>
<dbReference type="InterPro" id="IPR015887">
    <property type="entry name" value="DNA_glyclase_Znf_dom_DNA_BS"/>
</dbReference>
<dbReference type="InterPro" id="IPR020629">
    <property type="entry name" value="Formamido-pyr_DNA_Glyclase"/>
</dbReference>
<dbReference type="InterPro" id="IPR012319">
    <property type="entry name" value="FPG_cat"/>
</dbReference>
<dbReference type="InterPro" id="IPR035937">
    <property type="entry name" value="MutM-like_N-ter"/>
</dbReference>
<dbReference type="InterPro" id="IPR010979">
    <property type="entry name" value="Ribosomal_uS13-like_H2TH"/>
</dbReference>
<dbReference type="InterPro" id="IPR000214">
    <property type="entry name" value="Znf_DNA_glyclase/AP_lyase"/>
</dbReference>
<dbReference type="InterPro" id="IPR010663">
    <property type="entry name" value="Znf_FPG/IleRS"/>
</dbReference>
<dbReference type="NCBIfam" id="TIGR00577">
    <property type="entry name" value="fpg"/>
    <property type="match status" value="1"/>
</dbReference>
<dbReference type="NCBIfam" id="NF002211">
    <property type="entry name" value="PRK01103.1"/>
    <property type="match status" value="1"/>
</dbReference>
<dbReference type="PANTHER" id="PTHR22993">
    <property type="entry name" value="FORMAMIDOPYRIMIDINE-DNA GLYCOSYLASE"/>
    <property type="match status" value="1"/>
</dbReference>
<dbReference type="PANTHER" id="PTHR22993:SF9">
    <property type="entry name" value="FORMAMIDOPYRIMIDINE-DNA GLYCOSYLASE"/>
    <property type="match status" value="1"/>
</dbReference>
<dbReference type="Pfam" id="PF01149">
    <property type="entry name" value="Fapy_DNA_glyco"/>
    <property type="match status" value="1"/>
</dbReference>
<dbReference type="Pfam" id="PF06831">
    <property type="entry name" value="H2TH"/>
    <property type="match status" value="1"/>
</dbReference>
<dbReference type="Pfam" id="PF06827">
    <property type="entry name" value="zf-FPG_IleRS"/>
    <property type="match status" value="1"/>
</dbReference>
<dbReference type="SMART" id="SM00898">
    <property type="entry name" value="Fapy_DNA_glyco"/>
    <property type="match status" value="1"/>
</dbReference>
<dbReference type="SMART" id="SM01232">
    <property type="entry name" value="H2TH"/>
    <property type="match status" value="1"/>
</dbReference>
<dbReference type="SUPFAM" id="SSF57716">
    <property type="entry name" value="Glucocorticoid receptor-like (DNA-binding domain)"/>
    <property type="match status" value="1"/>
</dbReference>
<dbReference type="SUPFAM" id="SSF81624">
    <property type="entry name" value="N-terminal domain of MutM-like DNA repair proteins"/>
    <property type="match status" value="1"/>
</dbReference>
<dbReference type="SUPFAM" id="SSF46946">
    <property type="entry name" value="S13-like H2TH domain"/>
    <property type="match status" value="1"/>
</dbReference>
<dbReference type="PROSITE" id="PS51068">
    <property type="entry name" value="FPG_CAT"/>
    <property type="match status" value="1"/>
</dbReference>
<dbReference type="PROSITE" id="PS01242">
    <property type="entry name" value="ZF_FPG_1"/>
    <property type="match status" value="1"/>
</dbReference>
<dbReference type="PROSITE" id="PS51066">
    <property type="entry name" value="ZF_FPG_2"/>
    <property type="match status" value="1"/>
</dbReference>
<accession>Q98QQ1</accession>
<proteinExistence type="inferred from homology"/>
<keyword id="KW-0227">DNA damage</keyword>
<keyword id="KW-0234">DNA repair</keyword>
<keyword id="KW-0238">DNA-binding</keyword>
<keyword id="KW-0326">Glycosidase</keyword>
<keyword id="KW-0378">Hydrolase</keyword>
<keyword id="KW-0456">Lyase</keyword>
<keyword id="KW-0479">Metal-binding</keyword>
<keyword id="KW-0511">Multifunctional enzyme</keyword>
<keyword id="KW-1185">Reference proteome</keyword>
<keyword id="KW-0862">Zinc</keyword>
<keyword id="KW-0863">Zinc-finger</keyword>
<organism>
    <name type="scientific">Mycoplasmopsis pulmonis (strain UAB CTIP)</name>
    <name type="common">Mycoplasma pulmonis</name>
    <dbReference type="NCBI Taxonomy" id="272635"/>
    <lineage>
        <taxon>Bacteria</taxon>
        <taxon>Bacillati</taxon>
        <taxon>Mycoplasmatota</taxon>
        <taxon>Mycoplasmoidales</taxon>
        <taxon>Metamycoplasmataceae</taxon>
        <taxon>Mycoplasmopsis</taxon>
    </lineage>
</organism>
<sequence length="278" mass="32210">MPELPEVRVVCKSLNEKVQNLVFKKVEIFNPKLFKEYDPSYFQEFLIGEKILKISNLGKNIIYFLTNNKIMLSHLRMEGKYSFYEQKPKETLKHIQAIFYFENGSELHYRESRPFGTFHIRYLNNYLKIDPLAKVAQSPGEIDFETFYNRLSKKALAIKPTLLDQSIVSGIGNIYADEILFASKIHPATPSNLLSKDKVKEILKNAIEILDKSTELGGSSINSYESLNKKEGQYQNFLKVHTKKGEFCIKCSSKIEKIKFKGRGTYFCPTCQKQKDFI</sequence>
<evidence type="ECO:0000250" key="1"/>
<evidence type="ECO:0000305" key="2"/>
<comment type="function">
    <text evidence="1">Involved in base excision repair of DNA damaged by oxidation or by mutagenic agents. Acts as a DNA glycosylase that recognizes and removes damaged bases. Has a preference for oxidized purines, such as 7,8-dihydro-8-oxoguanine (8-oxoG). Has AP (apurinic/apyrimidinic) lyase activity and introduces nicks in the DNA strand. Cleaves the DNA backbone by beta-delta elimination to generate a single-strand break at the site of the removed base with both 3'- and 5'-phosphates (By similarity).</text>
</comment>
<comment type="catalytic activity">
    <reaction>
        <text>Hydrolysis of DNA containing ring-opened 7-methylguanine residues, releasing 2,6-diamino-4-hydroxy-5-(N-methyl)formamidopyrimidine.</text>
        <dbReference type="EC" id="3.2.2.23"/>
    </reaction>
</comment>
<comment type="catalytic activity">
    <reaction>
        <text>2'-deoxyribonucleotide-(2'-deoxyribose 5'-phosphate)-2'-deoxyribonucleotide-DNA = a 3'-end 2'-deoxyribonucleotide-(2,3-dehydro-2,3-deoxyribose 5'-phosphate)-DNA + a 5'-end 5'-phospho-2'-deoxyribonucleoside-DNA + H(+)</text>
        <dbReference type="Rhea" id="RHEA:66592"/>
        <dbReference type="Rhea" id="RHEA-COMP:13180"/>
        <dbReference type="Rhea" id="RHEA-COMP:16897"/>
        <dbReference type="Rhea" id="RHEA-COMP:17067"/>
        <dbReference type="ChEBI" id="CHEBI:15378"/>
        <dbReference type="ChEBI" id="CHEBI:136412"/>
        <dbReference type="ChEBI" id="CHEBI:157695"/>
        <dbReference type="ChEBI" id="CHEBI:167181"/>
        <dbReference type="EC" id="4.2.99.18"/>
    </reaction>
</comment>
<comment type="cofactor">
    <cofactor evidence="1">
        <name>Zn(2+)</name>
        <dbReference type="ChEBI" id="CHEBI:29105"/>
    </cofactor>
    <text evidence="1">Binds 1 zinc ion per subunit.</text>
</comment>
<comment type="subunit">
    <text evidence="1">Monomer.</text>
</comment>
<comment type="similarity">
    <text evidence="2">Belongs to the FPG family.</text>
</comment>
<reference key="1">
    <citation type="journal article" date="2001" name="Nucleic Acids Res.">
        <title>The complete genome sequence of the murine respiratory pathogen Mycoplasma pulmonis.</title>
        <authorList>
            <person name="Chambaud I."/>
            <person name="Heilig R."/>
            <person name="Ferris S."/>
            <person name="Barbe V."/>
            <person name="Samson D."/>
            <person name="Galisson F."/>
            <person name="Moszer I."/>
            <person name="Dybvig K."/>
            <person name="Wroblewski H."/>
            <person name="Viari A."/>
            <person name="Rocha E.P.C."/>
            <person name="Blanchard A."/>
        </authorList>
    </citation>
    <scope>NUCLEOTIDE SEQUENCE [LARGE SCALE GENOMIC DNA]</scope>
    <source>
        <strain>UAB CTIP</strain>
    </source>
</reference>